<reference key="1">
    <citation type="journal article" date="2000" name="DNA Res.">
        <title>Prediction of the coding sequences of unidentified human genes. XVII. The complete sequences of 100 new cDNA clones from brain which code for large proteins in vitro.</title>
        <authorList>
            <person name="Nagase T."/>
            <person name="Kikuno R."/>
            <person name="Ishikawa K."/>
            <person name="Hirosawa M."/>
            <person name="Ohara O."/>
        </authorList>
    </citation>
    <scope>NUCLEOTIDE SEQUENCE [LARGE SCALE MRNA] (ISOFORM 1)</scope>
    <source>
        <tissue>Brain</tissue>
    </source>
</reference>
<reference key="2">
    <citation type="journal article" date="2004" name="Nat. Genet.">
        <title>Complete sequencing and characterization of 21,243 full-length human cDNAs.</title>
        <authorList>
            <person name="Ota T."/>
            <person name="Suzuki Y."/>
            <person name="Nishikawa T."/>
            <person name="Otsuki T."/>
            <person name="Sugiyama T."/>
            <person name="Irie R."/>
            <person name="Wakamatsu A."/>
            <person name="Hayashi K."/>
            <person name="Sato H."/>
            <person name="Nagai K."/>
            <person name="Kimura K."/>
            <person name="Makita H."/>
            <person name="Sekine M."/>
            <person name="Obayashi M."/>
            <person name="Nishi T."/>
            <person name="Shibahara T."/>
            <person name="Tanaka T."/>
            <person name="Ishii S."/>
            <person name="Yamamoto J."/>
            <person name="Saito K."/>
            <person name="Kawai Y."/>
            <person name="Isono Y."/>
            <person name="Nakamura Y."/>
            <person name="Nagahari K."/>
            <person name="Murakami K."/>
            <person name="Yasuda T."/>
            <person name="Iwayanagi T."/>
            <person name="Wagatsuma M."/>
            <person name="Shiratori A."/>
            <person name="Sudo H."/>
            <person name="Hosoiri T."/>
            <person name="Kaku Y."/>
            <person name="Kodaira H."/>
            <person name="Kondo H."/>
            <person name="Sugawara M."/>
            <person name="Takahashi M."/>
            <person name="Kanda K."/>
            <person name="Yokoi T."/>
            <person name="Furuya T."/>
            <person name="Kikkawa E."/>
            <person name="Omura Y."/>
            <person name="Abe K."/>
            <person name="Kamihara K."/>
            <person name="Katsuta N."/>
            <person name="Sato K."/>
            <person name="Tanikawa M."/>
            <person name="Yamazaki M."/>
            <person name="Ninomiya K."/>
            <person name="Ishibashi T."/>
            <person name="Yamashita H."/>
            <person name="Murakawa K."/>
            <person name="Fujimori K."/>
            <person name="Tanai H."/>
            <person name="Kimata M."/>
            <person name="Watanabe M."/>
            <person name="Hiraoka S."/>
            <person name="Chiba Y."/>
            <person name="Ishida S."/>
            <person name="Ono Y."/>
            <person name="Takiguchi S."/>
            <person name="Watanabe S."/>
            <person name="Yosida M."/>
            <person name="Hotuta T."/>
            <person name="Kusano J."/>
            <person name="Kanehori K."/>
            <person name="Takahashi-Fujii A."/>
            <person name="Hara H."/>
            <person name="Tanase T.-O."/>
            <person name="Nomura Y."/>
            <person name="Togiya S."/>
            <person name="Komai F."/>
            <person name="Hara R."/>
            <person name="Takeuchi K."/>
            <person name="Arita M."/>
            <person name="Imose N."/>
            <person name="Musashino K."/>
            <person name="Yuuki H."/>
            <person name="Oshima A."/>
            <person name="Sasaki N."/>
            <person name="Aotsuka S."/>
            <person name="Yoshikawa Y."/>
            <person name="Matsunawa H."/>
            <person name="Ichihara T."/>
            <person name="Shiohata N."/>
            <person name="Sano S."/>
            <person name="Moriya S."/>
            <person name="Momiyama H."/>
            <person name="Satoh N."/>
            <person name="Takami S."/>
            <person name="Terashima Y."/>
            <person name="Suzuki O."/>
            <person name="Nakagawa S."/>
            <person name="Senoh A."/>
            <person name="Mizoguchi H."/>
            <person name="Goto Y."/>
            <person name="Shimizu F."/>
            <person name="Wakebe H."/>
            <person name="Hishigaki H."/>
            <person name="Watanabe T."/>
            <person name="Sugiyama A."/>
            <person name="Takemoto M."/>
            <person name="Kawakami B."/>
            <person name="Yamazaki M."/>
            <person name="Watanabe K."/>
            <person name="Kumagai A."/>
            <person name="Itakura S."/>
            <person name="Fukuzumi Y."/>
            <person name="Fujimori Y."/>
            <person name="Komiyama M."/>
            <person name="Tashiro H."/>
            <person name="Tanigami A."/>
            <person name="Fujiwara T."/>
            <person name="Ono T."/>
            <person name="Yamada K."/>
            <person name="Fujii Y."/>
            <person name="Ozaki K."/>
            <person name="Hirao M."/>
            <person name="Ohmori Y."/>
            <person name="Kawabata A."/>
            <person name="Hikiji T."/>
            <person name="Kobatake N."/>
            <person name="Inagaki H."/>
            <person name="Ikema Y."/>
            <person name="Okamoto S."/>
            <person name="Okitani R."/>
            <person name="Kawakami T."/>
            <person name="Noguchi S."/>
            <person name="Itoh T."/>
            <person name="Shigeta K."/>
            <person name="Senba T."/>
            <person name="Matsumura K."/>
            <person name="Nakajima Y."/>
            <person name="Mizuno T."/>
            <person name="Morinaga M."/>
            <person name="Sasaki M."/>
            <person name="Togashi T."/>
            <person name="Oyama M."/>
            <person name="Hata H."/>
            <person name="Watanabe M."/>
            <person name="Komatsu T."/>
            <person name="Mizushima-Sugano J."/>
            <person name="Satoh T."/>
            <person name="Shirai Y."/>
            <person name="Takahashi Y."/>
            <person name="Nakagawa K."/>
            <person name="Okumura K."/>
            <person name="Nagase T."/>
            <person name="Nomura N."/>
            <person name="Kikuchi H."/>
            <person name="Masuho Y."/>
            <person name="Yamashita R."/>
            <person name="Nakai K."/>
            <person name="Yada T."/>
            <person name="Nakamura Y."/>
            <person name="Ohara O."/>
            <person name="Isogai T."/>
            <person name="Sugano S."/>
        </authorList>
    </citation>
    <scope>NUCLEOTIDE SEQUENCE [LARGE SCALE MRNA] (ISOFORM 4)</scope>
    <source>
        <tissue>Teratocarcinoma</tissue>
    </source>
</reference>
<reference key="3">
    <citation type="journal article" date="2006" name="Nature">
        <title>The DNA sequence and biological annotation of human chromosome 1.</title>
        <authorList>
            <person name="Gregory S.G."/>
            <person name="Barlow K.F."/>
            <person name="McLay K.E."/>
            <person name="Kaul R."/>
            <person name="Swarbreck D."/>
            <person name="Dunham A."/>
            <person name="Scott C.E."/>
            <person name="Howe K.L."/>
            <person name="Woodfine K."/>
            <person name="Spencer C.C.A."/>
            <person name="Jones M.C."/>
            <person name="Gillson C."/>
            <person name="Searle S."/>
            <person name="Zhou Y."/>
            <person name="Kokocinski F."/>
            <person name="McDonald L."/>
            <person name="Evans R."/>
            <person name="Phillips K."/>
            <person name="Atkinson A."/>
            <person name="Cooper R."/>
            <person name="Jones C."/>
            <person name="Hall R.E."/>
            <person name="Andrews T.D."/>
            <person name="Lloyd C."/>
            <person name="Ainscough R."/>
            <person name="Almeida J.P."/>
            <person name="Ambrose K.D."/>
            <person name="Anderson F."/>
            <person name="Andrew R.W."/>
            <person name="Ashwell R.I.S."/>
            <person name="Aubin K."/>
            <person name="Babbage A.K."/>
            <person name="Bagguley C.L."/>
            <person name="Bailey J."/>
            <person name="Beasley H."/>
            <person name="Bethel G."/>
            <person name="Bird C.P."/>
            <person name="Bray-Allen S."/>
            <person name="Brown J.Y."/>
            <person name="Brown A.J."/>
            <person name="Buckley D."/>
            <person name="Burton J."/>
            <person name="Bye J."/>
            <person name="Carder C."/>
            <person name="Chapman J.C."/>
            <person name="Clark S.Y."/>
            <person name="Clarke G."/>
            <person name="Clee C."/>
            <person name="Cobley V."/>
            <person name="Collier R.E."/>
            <person name="Corby N."/>
            <person name="Coville G.J."/>
            <person name="Davies J."/>
            <person name="Deadman R."/>
            <person name="Dunn M."/>
            <person name="Earthrowl M."/>
            <person name="Ellington A.G."/>
            <person name="Errington H."/>
            <person name="Frankish A."/>
            <person name="Frankland J."/>
            <person name="French L."/>
            <person name="Garner P."/>
            <person name="Garnett J."/>
            <person name="Gay L."/>
            <person name="Ghori M.R.J."/>
            <person name="Gibson R."/>
            <person name="Gilby L.M."/>
            <person name="Gillett W."/>
            <person name="Glithero R.J."/>
            <person name="Grafham D.V."/>
            <person name="Griffiths C."/>
            <person name="Griffiths-Jones S."/>
            <person name="Grocock R."/>
            <person name="Hammond S."/>
            <person name="Harrison E.S.I."/>
            <person name="Hart E."/>
            <person name="Haugen E."/>
            <person name="Heath P.D."/>
            <person name="Holmes S."/>
            <person name="Holt K."/>
            <person name="Howden P.J."/>
            <person name="Hunt A.R."/>
            <person name="Hunt S.E."/>
            <person name="Hunter G."/>
            <person name="Isherwood J."/>
            <person name="James R."/>
            <person name="Johnson C."/>
            <person name="Johnson D."/>
            <person name="Joy A."/>
            <person name="Kay M."/>
            <person name="Kershaw J.K."/>
            <person name="Kibukawa M."/>
            <person name="Kimberley A.M."/>
            <person name="King A."/>
            <person name="Knights A.J."/>
            <person name="Lad H."/>
            <person name="Laird G."/>
            <person name="Lawlor S."/>
            <person name="Leongamornlert D.A."/>
            <person name="Lloyd D.M."/>
            <person name="Loveland J."/>
            <person name="Lovell J."/>
            <person name="Lush M.J."/>
            <person name="Lyne R."/>
            <person name="Martin S."/>
            <person name="Mashreghi-Mohammadi M."/>
            <person name="Matthews L."/>
            <person name="Matthews N.S.W."/>
            <person name="McLaren S."/>
            <person name="Milne S."/>
            <person name="Mistry S."/>
            <person name="Moore M.J.F."/>
            <person name="Nickerson T."/>
            <person name="O'Dell C.N."/>
            <person name="Oliver K."/>
            <person name="Palmeiri A."/>
            <person name="Palmer S.A."/>
            <person name="Parker A."/>
            <person name="Patel D."/>
            <person name="Pearce A.V."/>
            <person name="Peck A.I."/>
            <person name="Pelan S."/>
            <person name="Phelps K."/>
            <person name="Phillimore B.J."/>
            <person name="Plumb R."/>
            <person name="Rajan J."/>
            <person name="Raymond C."/>
            <person name="Rouse G."/>
            <person name="Saenphimmachak C."/>
            <person name="Sehra H.K."/>
            <person name="Sheridan E."/>
            <person name="Shownkeen R."/>
            <person name="Sims S."/>
            <person name="Skuce C.D."/>
            <person name="Smith M."/>
            <person name="Steward C."/>
            <person name="Subramanian S."/>
            <person name="Sycamore N."/>
            <person name="Tracey A."/>
            <person name="Tromans A."/>
            <person name="Van Helmond Z."/>
            <person name="Wall M."/>
            <person name="Wallis J.M."/>
            <person name="White S."/>
            <person name="Whitehead S.L."/>
            <person name="Wilkinson J.E."/>
            <person name="Willey D.L."/>
            <person name="Williams H."/>
            <person name="Wilming L."/>
            <person name="Wray P.W."/>
            <person name="Wu Z."/>
            <person name="Coulson A."/>
            <person name="Vaudin M."/>
            <person name="Sulston J.E."/>
            <person name="Durbin R.M."/>
            <person name="Hubbard T."/>
            <person name="Wooster R."/>
            <person name="Dunham I."/>
            <person name="Carter N.P."/>
            <person name="McVean G."/>
            <person name="Ross M.T."/>
            <person name="Harrow J."/>
            <person name="Olson M.V."/>
            <person name="Beck S."/>
            <person name="Rogers J."/>
            <person name="Bentley D.R."/>
        </authorList>
    </citation>
    <scope>NUCLEOTIDE SEQUENCE [LARGE SCALE GENOMIC DNA]</scope>
</reference>
<reference key="4">
    <citation type="journal article" date="2004" name="Genome Res.">
        <title>The status, quality, and expansion of the NIH full-length cDNA project: the Mammalian Gene Collection (MGC).</title>
        <authorList>
            <consortium name="The MGC Project Team"/>
        </authorList>
    </citation>
    <scope>NUCLEOTIDE SEQUENCE [LARGE SCALE MRNA] OF 1-77 (ISOFORM 2)</scope>
</reference>
<reference key="5">
    <citation type="journal article" date="2007" name="BMC Genomics">
        <title>The full-ORF clone resource of the German cDNA consortium.</title>
        <authorList>
            <person name="Bechtel S."/>
            <person name="Rosenfelder H."/>
            <person name="Duda A."/>
            <person name="Schmidt C.P."/>
            <person name="Ernst U."/>
            <person name="Wellenreuther R."/>
            <person name="Mehrle A."/>
            <person name="Schuster C."/>
            <person name="Bahr A."/>
            <person name="Bloecker H."/>
            <person name="Heubner D."/>
            <person name="Hoerlein A."/>
            <person name="Michel G."/>
            <person name="Wedler H."/>
            <person name="Koehrer K."/>
            <person name="Ottenwaelder B."/>
            <person name="Poustka A."/>
            <person name="Wiemann S."/>
            <person name="Schupp I."/>
        </authorList>
    </citation>
    <scope>NUCLEOTIDE SEQUENCE [LARGE SCALE MRNA] OF 709-1035 (ISOFORM 1)</scope>
    <source>
        <tissue>Mammary cancer</tissue>
    </source>
</reference>
<reference key="6">
    <citation type="journal article" date="2006" name="Cell">
        <title>Global, in vivo, and site-specific phosphorylation dynamics in signaling networks.</title>
        <authorList>
            <person name="Olsen J.V."/>
            <person name="Blagoev B."/>
            <person name="Gnad F."/>
            <person name="Macek B."/>
            <person name="Kumar C."/>
            <person name="Mortensen P."/>
            <person name="Mann M."/>
        </authorList>
    </citation>
    <scope>IDENTIFICATION BY MASS SPECTROMETRY [LARGE SCALE ANALYSIS]</scope>
    <source>
        <tissue>Cervix carcinoma</tissue>
    </source>
</reference>
<reference key="7">
    <citation type="journal article" date="2006" name="Nat. Biotechnol.">
        <title>A probability-based approach for high-throughput protein phosphorylation analysis and site localization.</title>
        <authorList>
            <person name="Beausoleil S.A."/>
            <person name="Villen J."/>
            <person name="Gerber S.A."/>
            <person name="Rush J."/>
            <person name="Gygi S.P."/>
        </authorList>
    </citation>
    <scope>PHOSPHORYLATION [LARGE SCALE ANALYSIS] AT SER-339; SER-342 AND SER-545</scope>
    <scope>IDENTIFICATION BY MASS SPECTROMETRY [LARGE SCALE ANALYSIS]</scope>
    <source>
        <tissue>Cervix carcinoma</tissue>
    </source>
</reference>
<reference key="8">
    <citation type="journal article" date="2008" name="J. Proteome Res.">
        <title>Combining protein-based IMAC, peptide-based IMAC, and MudPIT for efficient phosphoproteomic analysis.</title>
        <authorList>
            <person name="Cantin G.T."/>
            <person name="Yi W."/>
            <person name="Lu B."/>
            <person name="Park S.K."/>
            <person name="Xu T."/>
            <person name="Lee J.-D."/>
            <person name="Yates J.R. III"/>
        </authorList>
    </citation>
    <scope>PHOSPHORYLATION [LARGE SCALE ANALYSIS] AT SER-929</scope>
    <scope>IDENTIFICATION BY MASS SPECTROMETRY [LARGE SCALE ANALYSIS]</scope>
    <source>
        <tissue>Cervix carcinoma</tissue>
    </source>
</reference>
<reference key="9">
    <citation type="journal article" date="2008" name="Proc. Natl. Acad. Sci. U.S.A.">
        <title>A quantitative atlas of mitotic phosphorylation.</title>
        <authorList>
            <person name="Dephoure N."/>
            <person name="Zhou C."/>
            <person name="Villen J."/>
            <person name="Beausoleil S.A."/>
            <person name="Bakalarski C.E."/>
            <person name="Elledge S.J."/>
            <person name="Gygi S.P."/>
        </authorList>
    </citation>
    <scope>PHOSPHORYLATION [LARGE SCALE ANALYSIS] AT SER-215; THR-593; SER-669; SER-673; SER-858; SER-862; SER-929; SER-971 AND SER-979</scope>
    <scope>IDENTIFICATION BY MASS SPECTROMETRY [LARGE SCALE ANALYSIS]</scope>
    <source>
        <tissue>Cervix carcinoma</tissue>
    </source>
</reference>
<reference key="10">
    <citation type="journal article" date="2009" name="Anal. Chem.">
        <title>Lys-N and trypsin cover complementary parts of the phosphoproteome in a refined SCX-based approach.</title>
        <authorList>
            <person name="Gauci S."/>
            <person name="Helbig A.O."/>
            <person name="Slijper M."/>
            <person name="Krijgsveld J."/>
            <person name="Heck A.J."/>
            <person name="Mohammed S."/>
        </authorList>
    </citation>
    <scope>IDENTIFICATION BY MASS SPECTROMETRY [LARGE SCALE ANALYSIS]</scope>
</reference>
<reference key="11">
    <citation type="journal article" date="2009" name="Sci. Signal.">
        <title>Quantitative phosphoproteomic analysis of T cell receptor signaling reveals system-wide modulation of protein-protein interactions.</title>
        <authorList>
            <person name="Mayya V."/>
            <person name="Lundgren D.H."/>
            <person name="Hwang S.-I."/>
            <person name="Rezaul K."/>
            <person name="Wu L."/>
            <person name="Eng J.K."/>
            <person name="Rodionov V."/>
            <person name="Han D.K."/>
        </authorList>
    </citation>
    <scope>PHOSPHORYLATION [LARGE SCALE ANALYSIS] AT SER-215</scope>
    <scope>IDENTIFICATION BY MASS SPECTROMETRY [LARGE SCALE ANALYSIS]</scope>
    <source>
        <tissue>Leukemic T-cell</tissue>
    </source>
</reference>
<reference key="12">
    <citation type="journal article" date="2010" name="Proteomics">
        <title>Strategy for comprehensive identification of human N-myristoylated proteins using an insect cell-free protein synthesis system.</title>
        <authorList>
            <person name="Suzuki T."/>
            <person name="Moriya K."/>
            <person name="Nagatoshi K."/>
            <person name="Ota Y."/>
            <person name="Ezure T."/>
            <person name="Ando E."/>
            <person name="Tsunasawa S."/>
            <person name="Utsumi T."/>
        </authorList>
    </citation>
    <scope>MYRISTOYLATION AT GLY-2 (ISOFORM 3)</scope>
</reference>
<reference key="13">
    <citation type="journal article" date="2010" name="Sci. Signal.">
        <title>Quantitative phosphoproteomics reveals widespread full phosphorylation site occupancy during mitosis.</title>
        <authorList>
            <person name="Olsen J.V."/>
            <person name="Vermeulen M."/>
            <person name="Santamaria A."/>
            <person name="Kumar C."/>
            <person name="Miller M.L."/>
            <person name="Jensen L.J."/>
            <person name="Gnad F."/>
            <person name="Cox J."/>
            <person name="Jensen T.S."/>
            <person name="Nigg E.A."/>
            <person name="Brunak S."/>
            <person name="Mann M."/>
        </authorList>
    </citation>
    <scope>PHOSPHORYLATION [LARGE SCALE ANALYSIS] AT SER-145; SER-342; SER-545; SER-858; SER-862; SER-868; SER-929 AND SER-979</scope>
    <scope>IDENTIFICATION BY MASS SPECTROMETRY [LARGE SCALE ANALYSIS]</scope>
    <source>
        <tissue>Cervix carcinoma</tissue>
    </source>
</reference>
<reference key="14">
    <citation type="journal article" date="2011" name="Sci. Signal.">
        <title>System-wide temporal characterization of the proteome and phosphoproteome of human embryonic stem cell differentiation.</title>
        <authorList>
            <person name="Rigbolt K.T."/>
            <person name="Prokhorova T.A."/>
            <person name="Akimov V."/>
            <person name="Henningsen J."/>
            <person name="Johansen P.T."/>
            <person name="Kratchmarova I."/>
            <person name="Kassem M."/>
            <person name="Mann M."/>
            <person name="Olsen J.V."/>
            <person name="Blagoev B."/>
        </authorList>
    </citation>
    <scope>PHOSPHORYLATION [LARGE SCALE ANALYSIS] AT SER-545; SER-669; SER-971 AND SER-979</scope>
    <scope>IDENTIFICATION BY MASS SPECTROMETRY [LARGE SCALE ANALYSIS]</scope>
</reference>
<reference key="15">
    <citation type="journal article" date="2013" name="J. Proteome Res.">
        <title>Toward a comprehensive characterization of a human cancer cell phosphoproteome.</title>
        <authorList>
            <person name="Zhou H."/>
            <person name="Di Palma S."/>
            <person name="Preisinger C."/>
            <person name="Peng M."/>
            <person name="Polat A.N."/>
            <person name="Heck A.J."/>
            <person name="Mohammed S."/>
        </authorList>
    </citation>
    <scope>PHOSPHORYLATION [LARGE SCALE ANALYSIS] AT SER-93; SER-138; SER-145; SER-161; THR-162; SER-322; SER-327; SER-338; SER-339; SER-341; SER-342; SER-545; SER-669; SER-673; SER-858; SER-862; SER-929; SER-959; SER-971 AND SER-979</scope>
    <scope>IDENTIFICATION BY MASS SPECTROMETRY [LARGE SCALE ANALYSIS]</scope>
    <source>
        <tissue>Cervix carcinoma</tissue>
        <tissue>Erythroleukemia</tissue>
    </source>
</reference>
<reference key="16">
    <citation type="journal article" date="2014" name="J. Proteomics">
        <title>An enzyme assisted RP-RPLC approach for in-depth analysis of human liver phosphoproteome.</title>
        <authorList>
            <person name="Bian Y."/>
            <person name="Song C."/>
            <person name="Cheng K."/>
            <person name="Dong M."/>
            <person name="Wang F."/>
            <person name="Huang J."/>
            <person name="Sun D."/>
            <person name="Wang L."/>
            <person name="Ye M."/>
            <person name="Zou H."/>
        </authorList>
    </citation>
    <scope>PHOSPHORYLATION [LARGE SCALE ANALYSIS] AT SER-400; SER-669 AND SER-673</scope>
    <scope>IDENTIFICATION BY MASS SPECTROMETRY [LARGE SCALE ANALYSIS]</scope>
    <source>
        <tissue>Liver</tissue>
    </source>
</reference>
<reference key="17">
    <citation type="journal article" date="2016" name="Sci. Rep.">
        <title>KIAA1522 is a novel prognostic biomarker in patients with non-small cell lung cancer.</title>
        <authorList>
            <person name="Liu Y.Z."/>
            <person name="Yang H."/>
            <person name="Cao J."/>
            <person name="Jiang Y.Y."/>
            <person name="Hao J.J."/>
            <person name="Xu X."/>
            <person name="Cai Y."/>
            <person name="Wang M.R."/>
        </authorList>
    </citation>
    <scope>TISSUE SPECIFICITY</scope>
</reference>
<reference key="18">
    <citation type="journal article" date="2020" name="J. Exp. Clin. Cancer Res.">
        <title>KIAA1522 potentiates TNFalpha-NFkappaB signaling to antagonize platinum-based chemotherapy in lung adenocarcinoma.</title>
        <authorList>
            <person name="Wang B."/>
            <person name="Jing T."/>
            <person name="Jin W."/>
            <person name="Chen J."/>
            <person name="Wu C."/>
            <person name="Wang M."/>
            <person name="Liu Y."/>
        </authorList>
    </citation>
    <scope>FUNCTION</scope>
    <scope>TISSUE SPECIFICITY</scope>
</reference>
<reference key="19">
    <citation type="journal article" date="2023" name="Cornea">
        <title>New Endothelial Corneal Dystrophy in a Chinese Family.</title>
        <authorList>
            <person name="Ye M."/>
            <person name="Lu Q."/>
            <person name="Zhao D."/>
            <person name="Zhao B."/>
            <person name="Zhang S."/>
            <person name="Liao Y."/>
            <person name="Liao R."/>
        </authorList>
    </citation>
    <scope>INVOLVEMENT IN ATYPICAL ENDOTHELIAL CORNEAL DYSTROPHY</scope>
    <scope>VARIANT GLN-444</scope>
</reference>
<organism>
    <name type="scientific">Homo sapiens</name>
    <name type="common">Human</name>
    <dbReference type="NCBI Taxonomy" id="9606"/>
    <lineage>
        <taxon>Eukaryota</taxon>
        <taxon>Metazoa</taxon>
        <taxon>Chordata</taxon>
        <taxon>Craniata</taxon>
        <taxon>Vertebrata</taxon>
        <taxon>Euteleostomi</taxon>
        <taxon>Mammalia</taxon>
        <taxon>Eutheria</taxon>
        <taxon>Euarchontoglires</taxon>
        <taxon>Primates</taxon>
        <taxon>Haplorrhini</taxon>
        <taxon>Catarrhini</taxon>
        <taxon>Hominidae</taxon>
        <taxon>Homo</taxon>
    </lineage>
</organism>
<accession>Q9P206</accession>
<accession>B4DQU8</accession>
<accession>B5MDY0</accession>
<accession>C9JH84</accession>
<accession>Q8TCQ0</accession>
<gene>
    <name evidence="10" type="primary">NHSL3</name>
    <name type="synonym">KIAA1522</name>
</gene>
<comment type="function">
    <text evidence="5">Able to directly activate the TNF-NFkappaB signaling pathway.</text>
</comment>
<comment type="interaction">
    <interactant intactId="EBI-3939668">
        <id>Q9P206</id>
    </interactant>
    <interactant intactId="EBI-389883">
        <id>P16333</id>
        <label>NCK1</label>
    </interactant>
    <organismsDiffer>false</organismsDiffer>
    <experiments>4</experiments>
</comment>
<comment type="alternative products">
    <event type="alternative splicing"/>
    <isoform>
        <id>Q9P206-1</id>
        <name>1</name>
        <sequence type="displayed"/>
    </isoform>
    <isoform>
        <id>Q9P206-2</id>
        <name>2</name>
        <sequence type="described" ref="VSP_040217"/>
    </isoform>
    <isoform>
        <id>Q9P206-3</id>
        <name>3</name>
        <sequence type="described" ref="VSP_041634"/>
    </isoform>
    <isoform>
        <id>Q9P206-4</id>
        <name>4</name>
        <sequence type="described" ref="VSP_043215"/>
    </isoform>
</comment>
<comment type="tissue specificity">
    <text evidence="4 5">Expressed in lung.</text>
</comment>
<comment type="disease">
    <text evidence="6">Genetic variation involving NHSL3 may be a cause of atypical endothelial corneal dystrophy (ECD). The disease follows an autosomal dominant pattern of inheritance in the identified patients. Clinical characteristics of patients with the atypical form of ECD include peripheral endothelial opacities, an opaque ring along limbus, central endothelial opacities, central stromal opacities and corneal edema. The early phenotype of this atypical ECD is characterized by multiple small white translucent spots located in the Descemet membrane of the peripheral cornea.</text>
</comment>
<comment type="sequence caution" evidence="9">
    <conflict type="erroneous initiation">
        <sequence resource="EMBL-CDS" id="BAA96046"/>
    </conflict>
    <text>Extended N-terminus.</text>
</comment>
<sequence length="1035" mass="107095">MVVFVGRRLPALLGLFKKKGSAKAENDKHLSVGPGQGPGSAVDEHQDNVFFPSGRPPHLEELHTQAQEGLRSLQHQEKQKLNKGGWDHGDTQSIQSSRTGPDEDNISFCSQTTSYVAESSTAEDALSIRSEMIQRKGSTFRPHDSFPKSGKSGRRRRERRSTVLGLPQHVQKELGLRNEREAPGTPRAPGARDAVRIPTVDGRPRGTSGMGARVSLQALEAEAEAGAETEAMLQRHIDRVYRDDTFVGRSTGTRAPPLTRPMSLAVPGLTGGAGPAEPLSPAMSISPQATYLSKLIPHAVLPPTVDVVALGRCSLRTLSRCSLHSASPASVRSLGRFSSVSSPQPRSRHPSSSSDTWSHSQSSDTIVSDGSTLSSKGGSEGQPESSTASNSVVPPPQGGSGRGSPSGGSTAEASDTLSIRSSGQLSGRSVSLRKLKRPPPPPRRTHSLHQRGLAVPDGPLGLPPKPERKQQPQLPRPPTTGGSEGAGAAPCPPNPANSWVPGLSPGGSRRPPRSPERTLSPSSGYSSQSGTPTLPPKGLAGPPASPGKAQPPKPERVTSLRSPGASVSSSLTSLCSSSSDPAPSDRSGPQILTPLGDRFVIPPHPKVPAPFSPPPSKPRSPNPAAPALAAPAVVPGPVSTTDASPQSPPTPQTTLTPLQESPVISKDQSPPPSPPPSYHPPPPPTKKPEVVVEAPSASETAEEPLQDPNWPPPPPPAPEEQDLSMADFPPPEEAFFSVASPEPAGPSGSPELVSSPAASSSSATALQIQPPGSPDPPPAPPAPAPASSAPGHVAKLPQKEPVGCSKGGGPPREDVGAPLVTPSLLQMVRLRSVGAPGGAPTPALGPSAPQKPLRRALSGRASPVPAPSSGLHAAVRLKACSLAASEGLSSAQPNGPPEAEPRPPQSPASTASFIFSKGSRKLQLERPVSPETQADLQRNLVAELRSISEQRPPQAPKKSPKAPPPVARKPSVGVPPPASPSYPRAEPLTAPPTNGLPHTQDRTKRELAENGGVLQLVGPEEKMGLPGSDSQKELA</sequence>
<proteinExistence type="evidence at protein level"/>
<keyword id="KW-0025">Alternative splicing</keyword>
<keyword id="KW-0449">Lipoprotein</keyword>
<keyword id="KW-0488">Methylation</keyword>
<keyword id="KW-0519">Myristate</keyword>
<keyword id="KW-0597">Phosphoprotein</keyword>
<keyword id="KW-1267">Proteomics identification</keyword>
<keyword id="KW-1185">Reference proteome</keyword>
<dbReference type="EMBL" id="AB040955">
    <property type="protein sequence ID" value="BAA96046.1"/>
    <property type="status" value="ALT_INIT"/>
    <property type="molecule type" value="mRNA"/>
</dbReference>
<dbReference type="EMBL" id="AK298965">
    <property type="protein sequence ID" value="BAG61060.1"/>
    <property type="molecule type" value="mRNA"/>
</dbReference>
<dbReference type="EMBL" id="AC114489">
    <property type="status" value="NOT_ANNOTATED_CDS"/>
    <property type="molecule type" value="Genomic_DNA"/>
</dbReference>
<dbReference type="EMBL" id="AI587184">
    <property type="status" value="NOT_ANNOTATED_CDS"/>
    <property type="molecule type" value="mRNA"/>
</dbReference>
<dbReference type="EMBL" id="AL713671">
    <property type="protein sequence ID" value="CAD28477.2"/>
    <property type="molecule type" value="mRNA"/>
</dbReference>
<dbReference type="CCDS" id="CCDS41298.1">
    <molecule id="Q9P206-2"/>
</dbReference>
<dbReference type="CCDS" id="CCDS55588.1">
    <molecule id="Q9P206-1"/>
</dbReference>
<dbReference type="CCDS" id="CCDS55589.1">
    <molecule id="Q9P206-4"/>
</dbReference>
<dbReference type="CCDS" id="CCDS90910.1">
    <molecule id="Q9P206-3"/>
</dbReference>
<dbReference type="RefSeq" id="NP_001185901.1">
    <molecule id="Q9P206-1"/>
    <property type="nucleotide sequence ID" value="NM_001198972.2"/>
</dbReference>
<dbReference type="RefSeq" id="NP_001185902.1">
    <molecule id="Q9P206-4"/>
    <property type="nucleotide sequence ID" value="NM_001198973.2"/>
</dbReference>
<dbReference type="RefSeq" id="NP_001356482.1">
    <molecule id="Q9P206-3"/>
    <property type="nucleotide sequence ID" value="NM_001369553.1"/>
</dbReference>
<dbReference type="RefSeq" id="NP_065939.2">
    <molecule id="Q9P206-2"/>
    <property type="nucleotide sequence ID" value="NM_020888.3"/>
</dbReference>
<dbReference type="RefSeq" id="XP_006710854.1">
    <property type="nucleotide sequence ID" value="XM_006710791.3"/>
</dbReference>
<dbReference type="BioGRID" id="121685">
    <property type="interactions" value="126"/>
</dbReference>
<dbReference type="FunCoup" id="Q9P206">
    <property type="interactions" value="412"/>
</dbReference>
<dbReference type="IntAct" id="Q9P206">
    <property type="interactions" value="92"/>
</dbReference>
<dbReference type="MINT" id="Q9P206"/>
<dbReference type="STRING" id="9606.ENSP00000383851"/>
<dbReference type="GlyGen" id="Q9P206">
    <property type="glycosylation" value="3 sites"/>
</dbReference>
<dbReference type="iPTMnet" id="Q9P206"/>
<dbReference type="PhosphoSitePlus" id="Q9P206"/>
<dbReference type="SwissPalm" id="Q9P206"/>
<dbReference type="BioMuta" id="KIAA1522"/>
<dbReference type="DMDM" id="160395559"/>
<dbReference type="jPOST" id="Q9P206"/>
<dbReference type="MassIVE" id="Q9P206"/>
<dbReference type="PaxDb" id="9606-ENSP00000383851"/>
<dbReference type="PeptideAtlas" id="Q9P206"/>
<dbReference type="ProteomicsDB" id="83699">
    <molecule id="Q9P206-1"/>
</dbReference>
<dbReference type="ProteomicsDB" id="83700">
    <molecule id="Q9P206-2"/>
</dbReference>
<dbReference type="ProteomicsDB" id="83701">
    <molecule id="Q9P206-3"/>
</dbReference>
<dbReference type="ProteomicsDB" id="83702">
    <molecule id="Q9P206-4"/>
</dbReference>
<dbReference type="Pumba" id="Q9P206"/>
<dbReference type="Antibodypedia" id="31358">
    <property type="antibodies" value="43 antibodies from 12 providers"/>
</dbReference>
<dbReference type="DNASU" id="57648"/>
<dbReference type="Ensembl" id="ENST00000294521.7">
    <molecule id="Q9P206-4"/>
    <property type="protein sequence ID" value="ENSP00000294521.3"/>
    <property type="gene ID" value="ENSG00000162522.11"/>
</dbReference>
<dbReference type="Ensembl" id="ENST00000373480.1">
    <molecule id="Q9P206-1"/>
    <property type="protein sequence ID" value="ENSP00000362579.1"/>
    <property type="gene ID" value="ENSG00000162522.11"/>
</dbReference>
<dbReference type="Ensembl" id="ENST00000373481.7">
    <molecule id="Q9P206-3"/>
    <property type="protein sequence ID" value="ENSP00000362580.3"/>
    <property type="gene ID" value="ENSG00000162522.11"/>
</dbReference>
<dbReference type="Ensembl" id="ENST00000401073.7">
    <molecule id="Q9P206-2"/>
    <property type="protein sequence ID" value="ENSP00000383851.2"/>
    <property type="gene ID" value="ENSG00000162522.11"/>
</dbReference>
<dbReference type="GeneID" id="57648"/>
<dbReference type="KEGG" id="hsa:57648"/>
<dbReference type="MANE-Select" id="ENST00000401073.7">
    <molecule id="Q9P206-2"/>
    <property type="protein sequence ID" value="ENSP00000383851.2"/>
    <property type="RefSeq nucleotide sequence ID" value="NM_020888.3"/>
    <property type="RefSeq protein sequence ID" value="NP_065939.2"/>
</dbReference>
<dbReference type="UCSC" id="uc001bvu.2">
    <molecule id="Q9P206-1"/>
    <property type="organism name" value="human"/>
</dbReference>
<dbReference type="AGR" id="HGNC:29301"/>
<dbReference type="CTD" id="57648"/>
<dbReference type="DisGeNET" id="57648"/>
<dbReference type="GeneCards" id="NHSL3"/>
<dbReference type="HGNC" id="HGNC:29301">
    <property type="gene designation" value="NHSL3"/>
</dbReference>
<dbReference type="HPA" id="ENSG00000162522">
    <property type="expression patterns" value="Low tissue specificity"/>
</dbReference>
<dbReference type="neXtProt" id="NX_Q9P206"/>
<dbReference type="OpenTargets" id="ENSG00000162522"/>
<dbReference type="PharmGKB" id="PA142671612"/>
<dbReference type="VEuPathDB" id="HostDB:ENSG00000162522"/>
<dbReference type="eggNOG" id="ENOG502QV6M">
    <property type="taxonomic scope" value="Eukaryota"/>
</dbReference>
<dbReference type="GeneTree" id="ENSGT00950000182963"/>
<dbReference type="HOGENOM" id="CLU_1943035_0_0_1"/>
<dbReference type="InParanoid" id="Q9P206"/>
<dbReference type="OMA" id="LLCRHKS"/>
<dbReference type="OrthoDB" id="9948858at2759"/>
<dbReference type="PAN-GO" id="Q9P206">
    <property type="GO annotations" value="1 GO annotation based on evolutionary models"/>
</dbReference>
<dbReference type="PhylomeDB" id="Q9P206"/>
<dbReference type="TreeFam" id="TF333323"/>
<dbReference type="PathwayCommons" id="Q9P206"/>
<dbReference type="SignaLink" id="Q9P206"/>
<dbReference type="BioGRID-ORCS" id="57648">
    <property type="hits" value="13 hits in 1159 CRISPR screens"/>
</dbReference>
<dbReference type="ChiTaRS" id="KIAA1522">
    <property type="organism name" value="human"/>
</dbReference>
<dbReference type="GenomeRNAi" id="57648"/>
<dbReference type="Pharos" id="Q9P206">
    <property type="development level" value="Tdark"/>
</dbReference>
<dbReference type="PRO" id="PR:Q9P206"/>
<dbReference type="Proteomes" id="UP000005640">
    <property type="component" value="Chromosome 1"/>
</dbReference>
<dbReference type="RNAct" id="Q9P206">
    <property type="molecule type" value="protein"/>
</dbReference>
<dbReference type="Bgee" id="ENSG00000162522">
    <property type="expression patterns" value="Expressed in ileal mucosa and 156 other cell types or tissues"/>
</dbReference>
<dbReference type="GO" id="GO:0030154">
    <property type="term" value="P:cell differentiation"/>
    <property type="evidence" value="ECO:0000318"/>
    <property type="project" value="GO_Central"/>
</dbReference>
<dbReference type="InterPro" id="IPR024845">
    <property type="entry name" value="NHS-like"/>
</dbReference>
<dbReference type="PANTHER" id="PTHR23039">
    <property type="entry name" value="NANCE-HORAN SYNDROME PROTEIN"/>
    <property type="match status" value="1"/>
</dbReference>
<dbReference type="PANTHER" id="PTHR23039:SF6">
    <property type="entry name" value="SIMILAR TO MKIAA1522 PROTEIN"/>
    <property type="match status" value="1"/>
</dbReference>
<dbReference type="Pfam" id="PF15273">
    <property type="entry name" value="NHS"/>
    <property type="match status" value="1"/>
</dbReference>
<feature type="chain" id="PRO_0000311246" description="NHS-like protein 3">
    <location>
        <begin position="1"/>
        <end position="1035"/>
    </location>
</feature>
<feature type="region of interest" description="Disordered" evidence="2">
    <location>
        <begin position="23"/>
        <end position="44"/>
    </location>
</feature>
<feature type="region of interest" description="Disordered" evidence="2">
    <location>
        <begin position="76"/>
        <end position="105"/>
    </location>
</feature>
<feature type="region of interest" description="Disordered" evidence="2">
    <location>
        <begin position="133"/>
        <end position="162"/>
    </location>
</feature>
<feature type="region of interest" description="Disordered" evidence="2">
    <location>
        <begin position="332"/>
        <end position="869"/>
    </location>
</feature>
<feature type="region of interest" description="Disordered" evidence="2">
    <location>
        <begin position="885"/>
        <end position="1035"/>
    </location>
</feature>
<feature type="compositionally biased region" description="Basic and acidic residues" evidence="2">
    <location>
        <begin position="76"/>
        <end position="90"/>
    </location>
</feature>
<feature type="compositionally biased region" description="Low complexity" evidence="2">
    <location>
        <begin position="338"/>
        <end position="365"/>
    </location>
</feature>
<feature type="compositionally biased region" description="Polar residues" evidence="2">
    <location>
        <begin position="366"/>
        <end position="388"/>
    </location>
</feature>
<feature type="compositionally biased region" description="Polar residues" evidence="2">
    <location>
        <begin position="411"/>
        <end position="429"/>
    </location>
</feature>
<feature type="compositionally biased region" description="Basic residues" evidence="2">
    <location>
        <begin position="431"/>
        <end position="449"/>
    </location>
</feature>
<feature type="compositionally biased region" description="Low complexity" evidence="2">
    <location>
        <begin position="517"/>
        <end position="532"/>
    </location>
</feature>
<feature type="compositionally biased region" description="Pro residues" evidence="2">
    <location>
        <begin position="543"/>
        <end position="552"/>
    </location>
</feature>
<feature type="compositionally biased region" description="Low complexity" evidence="2">
    <location>
        <begin position="562"/>
        <end position="589"/>
    </location>
</feature>
<feature type="compositionally biased region" description="Pro residues" evidence="2">
    <location>
        <begin position="602"/>
        <end position="624"/>
    </location>
</feature>
<feature type="compositionally biased region" description="Low complexity" evidence="2">
    <location>
        <begin position="625"/>
        <end position="645"/>
    </location>
</feature>
<feature type="compositionally biased region" description="Low complexity" evidence="2">
    <location>
        <begin position="652"/>
        <end position="662"/>
    </location>
</feature>
<feature type="compositionally biased region" description="Pro residues" evidence="2">
    <location>
        <begin position="669"/>
        <end position="685"/>
    </location>
</feature>
<feature type="compositionally biased region" description="Pro residues" evidence="2">
    <location>
        <begin position="709"/>
        <end position="718"/>
    </location>
</feature>
<feature type="compositionally biased region" description="Low complexity" evidence="2">
    <location>
        <begin position="737"/>
        <end position="765"/>
    </location>
</feature>
<feature type="compositionally biased region" description="Pro residues" evidence="2">
    <location>
        <begin position="771"/>
        <end position="784"/>
    </location>
</feature>
<feature type="compositionally biased region" description="Low complexity" evidence="2">
    <location>
        <begin position="838"/>
        <end position="848"/>
    </location>
</feature>
<feature type="compositionally biased region" description="Pro residues" evidence="2">
    <location>
        <begin position="894"/>
        <end position="906"/>
    </location>
</feature>
<feature type="compositionally biased region" description="Pro residues" evidence="2">
    <location>
        <begin position="961"/>
        <end position="980"/>
    </location>
</feature>
<feature type="compositionally biased region" description="Basic and acidic residues" evidence="2">
    <location>
        <begin position="999"/>
        <end position="1008"/>
    </location>
</feature>
<feature type="modified residue" description="Phosphoserine" evidence="17">
    <location>
        <position position="93"/>
    </location>
</feature>
<feature type="modified residue" description="Phosphoserine" evidence="17">
    <location>
        <position position="138"/>
    </location>
</feature>
<feature type="modified residue" description="Phosphoserine" evidence="15 17">
    <location>
        <position position="145"/>
    </location>
</feature>
<feature type="modified residue" description="Phosphoserine" evidence="17">
    <location>
        <position position="161"/>
    </location>
</feature>
<feature type="modified residue" description="Phosphothreonine" evidence="17">
    <location>
        <position position="162"/>
    </location>
</feature>
<feature type="modified residue" description="Phosphoserine" evidence="13 14">
    <location>
        <position position="215"/>
    </location>
</feature>
<feature type="modified residue" description="Asymmetric dimethylarginine" evidence="1">
    <location>
        <position position="320"/>
    </location>
</feature>
<feature type="modified residue" description="Phosphoserine" evidence="17">
    <location>
        <position position="322"/>
    </location>
</feature>
<feature type="modified residue" description="Phosphoserine" evidence="17">
    <location>
        <position position="327"/>
    </location>
</feature>
<feature type="modified residue" description="Phosphoserine" evidence="1">
    <location>
        <position position="330"/>
    </location>
</feature>
<feature type="modified residue" description="Phosphoserine" evidence="17">
    <location>
        <position position="338"/>
    </location>
</feature>
<feature type="modified residue" description="Phosphoserine" evidence="11 17">
    <location>
        <position position="339"/>
    </location>
</feature>
<feature type="modified residue" description="Phosphoserine" evidence="17">
    <location>
        <position position="341"/>
    </location>
</feature>
<feature type="modified residue" description="Phosphoserine" evidence="11 15 17">
    <location>
        <position position="342"/>
    </location>
</feature>
<feature type="modified residue" description="Phosphoserine" evidence="18">
    <location>
        <position position="400"/>
    </location>
</feature>
<feature type="modified residue" description="Phosphoserine" evidence="1">
    <location>
        <position position="404"/>
    </location>
</feature>
<feature type="modified residue" description="Phosphoserine" evidence="1">
    <location>
        <position position="409"/>
    </location>
</feature>
<feature type="modified residue" description="Phosphothreonine" evidence="1">
    <location>
        <position position="531"/>
    </location>
</feature>
<feature type="modified residue" description="Phosphoserine" evidence="11 15 16 17">
    <location>
        <position position="545"/>
    </location>
</feature>
<feature type="modified residue" description="Phosphothreonine" evidence="13">
    <location>
        <position position="593"/>
    </location>
</feature>
<feature type="modified residue" description="Phosphoserine" evidence="1">
    <location>
        <position position="612"/>
    </location>
</feature>
<feature type="modified residue" description="Phosphoserine" evidence="13 16 17 18">
    <location>
        <position position="669"/>
    </location>
</feature>
<feature type="modified residue" description="Phosphoserine" evidence="13 17 18">
    <location>
        <position position="673"/>
    </location>
</feature>
<feature type="modified residue" description="Phosphoserine" evidence="13 15 17">
    <location>
        <position position="858"/>
    </location>
</feature>
<feature type="modified residue" description="Phosphoserine" evidence="13 15 17">
    <location>
        <position position="862"/>
    </location>
</feature>
<feature type="modified residue" description="Phosphoserine" evidence="15">
    <location>
        <position position="868"/>
    </location>
</feature>
<feature type="modified residue" description="Phosphoserine" evidence="12 13 15 17">
    <location>
        <position position="929"/>
    </location>
</feature>
<feature type="modified residue" description="Phosphoserine" evidence="17">
    <location>
        <position position="959"/>
    </location>
</feature>
<feature type="modified residue" description="Phosphoserine" evidence="13 16 17">
    <location>
        <position position="971"/>
    </location>
</feature>
<feature type="modified residue" description="Phosphoserine" evidence="13 15 16 17">
    <location>
        <position position="979"/>
    </location>
</feature>
<feature type="splice variant" id="VSP_040217" description="In isoform 2." evidence="8">
    <original>MVVFVGRRLPALLGLFKKK</original>
    <variation>MAARAPPAAPAAEEPGNPGGPPRRKKSRSGASGLRRAFSWLRGKRRKKKAAGAEGAEPAAPRAKKAEDKAKRAKGKGR</variation>
    <location>
        <begin position="1"/>
        <end position="19"/>
    </location>
</feature>
<feature type="splice variant" id="VSP_041634" description="In isoform 3." evidence="9">
    <original>MVVFVGRRLPALLGLFKKK</original>
    <variation>MGNSHHKRKAPSGPRVRSFWRFGRSAKRPA</variation>
    <location>
        <begin position="1"/>
        <end position="19"/>
    </location>
</feature>
<feature type="splice variant" id="VSP_043215" description="In isoform 4." evidence="7">
    <location>
        <begin position="137"/>
        <end position="1028"/>
    </location>
</feature>
<feature type="sequence variant" id="VAR_037190" description="In dbSNP:rs11803515.">
    <original>P</original>
    <variation>S</variation>
    <location>
        <position position="57"/>
    </location>
</feature>
<feature type="sequence variant" id="VAR_037191" description="In dbSNP:rs3737994.">
    <original>S</original>
    <variation>P</variation>
    <location>
        <position position="114"/>
    </location>
</feature>
<feature type="sequence variant" id="VAR_037192" description="In dbSNP:rs12730560.">
    <original>M</original>
    <variation>V</variation>
    <location>
        <position position="232"/>
    </location>
</feature>
<feature type="sequence variant" id="VAR_037193" description="In dbSNP:rs11582639.">
    <original>L</original>
    <variation>I</variation>
    <location>
        <position position="310"/>
    </location>
</feature>
<feature type="sequence variant" id="VAR_088725" description="Found in patients with atypical endothelial corneal dystrophy; uncertain significance; dbSNP:rs541240128." evidence="6">
    <original>R</original>
    <variation>Q</variation>
    <location>
        <position position="444"/>
    </location>
</feature>
<feature type="sequence variant" id="VAR_037194" description="In dbSNP:rs581875.">
    <original>P</original>
    <variation>L</variation>
    <location>
        <position position="770"/>
    </location>
</feature>
<feature type="sequence variant" id="VAR_037195" description="In dbSNP:rs675928.">
    <original>E</original>
    <variation>K</variation>
    <location>
        <position position="1021"/>
    </location>
</feature>
<feature type="initiator methionine" description="Removed" evidence="9">
    <location sequence="Q9P206-3">
        <position position="1"/>
    </location>
</feature>
<feature type="lipid moiety-binding region" description="N-myristoyl glycine" evidence="3">
    <location sequence="Q9P206-3">
        <position position="2"/>
    </location>
</feature>
<evidence type="ECO:0000250" key="1">
    <source>
        <dbReference type="UniProtKB" id="A2A7S8"/>
    </source>
</evidence>
<evidence type="ECO:0000256" key="2">
    <source>
        <dbReference type="SAM" id="MobiDB-lite"/>
    </source>
</evidence>
<evidence type="ECO:0000269" key="3">
    <source>
    </source>
</evidence>
<evidence type="ECO:0000269" key="4">
    <source>
    </source>
</evidence>
<evidence type="ECO:0000269" key="5">
    <source>
    </source>
</evidence>
<evidence type="ECO:0000269" key="6">
    <source>
    </source>
</evidence>
<evidence type="ECO:0000303" key="7">
    <source>
    </source>
</evidence>
<evidence type="ECO:0000303" key="8">
    <source>
    </source>
</evidence>
<evidence type="ECO:0000305" key="9"/>
<evidence type="ECO:0000312" key="10">
    <source>
        <dbReference type="HGNC" id="HGNC:29301"/>
    </source>
</evidence>
<evidence type="ECO:0007744" key="11">
    <source>
    </source>
</evidence>
<evidence type="ECO:0007744" key="12">
    <source>
    </source>
</evidence>
<evidence type="ECO:0007744" key="13">
    <source>
    </source>
</evidence>
<evidence type="ECO:0007744" key="14">
    <source>
    </source>
</evidence>
<evidence type="ECO:0007744" key="15">
    <source>
    </source>
</evidence>
<evidence type="ECO:0007744" key="16">
    <source>
    </source>
</evidence>
<evidence type="ECO:0007744" key="17">
    <source>
    </source>
</evidence>
<evidence type="ECO:0007744" key="18">
    <source>
    </source>
</evidence>
<name>NHSL3_HUMAN</name>
<protein>
    <recommendedName>
        <fullName evidence="9">NHS-like protein 3</fullName>
    </recommendedName>
</protein>